<organismHost>
    <name type="scientific">Acanthamoeba polyphaga</name>
    <name type="common">Amoeba</name>
    <dbReference type="NCBI Taxonomy" id="5757"/>
</organismHost>
<reference key="1">
    <citation type="journal article" date="2004" name="Science">
        <title>The 1.2-megabase genome sequence of Mimivirus.</title>
        <authorList>
            <person name="Raoult D."/>
            <person name="Audic S."/>
            <person name="Robert C."/>
            <person name="Abergel C."/>
            <person name="Renesto P."/>
            <person name="Ogata H."/>
            <person name="La Scola B."/>
            <person name="Susan M."/>
            <person name="Claverie J.-M."/>
        </authorList>
    </citation>
    <scope>NUCLEOTIDE SEQUENCE [LARGE SCALE GENOMIC DNA]</scope>
    <source>
        <strain>Rowbotham-Bradford</strain>
    </source>
</reference>
<feature type="chain" id="PRO_0000250619" description="Putative mRNA-decapping protein">
    <location>
        <begin position="1"/>
        <end position="360"/>
    </location>
</feature>
<feature type="domain" description="Nudix hydrolase" evidence="3">
    <location>
        <begin position="163"/>
        <end position="347"/>
    </location>
</feature>
<feature type="zinc finger region" description="CCHC-type" evidence="2">
    <location>
        <begin position="11"/>
        <end position="28"/>
    </location>
</feature>
<feature type="short sequence motif" description="Nudix box">
    <location>
        <begin position="242"/>
        <end position="264"/>
    </location>
</feature>
<feature type="active site" description="Nucleophile" evidence="1">
    <location>
        <position position="258"/>
    </location>
</feature>
<feature type="binding site" evidence="1">
    <location>
        <position position="249"/>
    </location>
    <ligand>
        <name>Mg(2+)</name>
        <dbReference type="ChEBI" id="CHEBI:18420"/>
    </ligand>
</feature>
<feature type="binding site" evidence="1">
    <location>
        <position position="262"/>
    </location>
    <ligand>
        <name>Mg(2+)</name>
        <dbReference type="ChEBI" id="CHEBI:18420"/>
    </ligand>
</feature>
<keyword id="KW-0378">Hydrolase</keyword>
<keyword id="KW-0460">Magnesium</keyword>
<keyword id="KW-0464">Manganese</keyword>
<keyword id="KW-0479">Metal-binding</keyword>
<keyword id="KW-0511">Multifunctional enzyme</keyword>
<keyword id="KW-1185">Reference proteome</keyword>
<keyword id="KW-0862">Zinc</keyword>
<keyword id="KW-0863">Zinc-finger</keyword>
<comment type="function">
    <text evidence="1">Might function as a decapping enzyme required for the removal of the 5'-end m7GpppN cap tethered to viral and host mRNAs to allow their decay in cells. In addition to the mRNA cap, probably also efficiently hydrolyzes diphosphoinositol polyphosphates (By similarity).</text>
</comment>
<comment type="catalytic activity">
    <reaction>
        <text>diphospho-myo-inositol polyphosphate + H2O = myo-inositol polyphosphate + phosphate.</text>
        <dbReference type="EC" id="3.6.1.52"/>
    </reaction>
</comment>
<comment type="cofactor">
    <cofactor evidence="1">
        <name>Mg(2+)</name>
        <dbReference type="ChEBI" id="CHEBI:18420"/>
    </cofactor>
    <cofactor evidence="1">
        <name>Mn(2+)</name>
        <dbReference type="ChEBI" id="CHEBI:29035"/>
    </cofactor>
</comment>
<comment type="similarity">
    <text evidence="4">Belongs to the Nudix hydrolase family. DIPP subfamily.</text>
</comment>
<dbReference type="EC" id="3.1.3.-"/>
<dbReference type="EC" id="3.6.1.52"/>
<dbReference type="EMBL" id="AY653733">
    <property type="protein sequence ID" value="AAV50644.1"/>
    <property type="molecule type" value="Genomic_DNA"/>
</dbReference>
<dbReference type="SMR" id="Q5UQW2"/>
<dbReference type="KEGG" id="vg:9924996"/>
<dbReference type="OrthoDB" id="8016at10239"/>
<dbReference type="Proteomes" id="UP000001134">
    <property type="component" value="Genome"/>
</dbReference>
<dbReference type="GO" id="GO:0004081">
    <property type="term" value="F:bis(5'-nucleosyl)-tetraphosphatase (asymmetrical) activity"/>
    <property type="evidence" value="ECO:0007669"/>
    <property type="project" value="TreeGrafter"/>
</dbReference>
<dbReference type="GO" id="GO:0008486">
    <property type="term" value="F:diphosphoinositol-polyphosphate diphosphatase activity"/>
    <property type="evidence" value="ECO:0007669"/>
    <property type="project" value="UniProtKB-EC"/>
</dbReference>
<dbReference type="GO" id="GO:0003676">
    <property type="term" value="F:nucleic acid binding"/>
    <property type="evidence" value="ECO:0007669"/>
    <property type="project" value="InterPro"/>
</dbReference>
<dbReference type="GO" id="GO:0008270">
    <property type="term" value="F:zinc ion binding"/>
    <property type="evidence" value="ECO:0007669"/>
    <property type="project" value="UniProtKB-KW"/>
</dbReference>
<dbReference type="GO" id="GO:0006167">
    <property type="term" value="P:AMP biosynthetic process"/>
    <property type="evidence" value="ECO:0007669"/>
    <property type="project" value="TreeGrafter"/>
</dbReference>
<dbReference type="GO" id="GO:0006754">
    <property type="term" value="P:ATP biosynthetic process"/>
    <property type="evidence" value="ECO:0007669"/>
    <property type="project" value="TreeGrafter"/>
</dbReference>
<dbReference type="Gene3D" id="3.90.79.10">
    <property type="entry name" value="Nucleoside Triphosphate Pyrophosphohydrolase"/>
    <property type="match status" value="1"/>
</dbReference>
<dbReference type="InterPro" id="IPR015797">
    <property type="entry name" value="NUDIX_hydrolase-like_dom_sf"/>
</dbReference>
<dbReference type="InterPro" id="IPR000086">
    <property type="entry name" value="NUDIX_hydrolase_dom"/>
</dbReference>
<dbReference type="InterPro" id="IPR051325">
    <property type="entry name" value="Nudix_hydrolase_domain"/>
</dbReference>
<dbReference type="InterPro" id="IPR001878">
    <property type="entry name" value="Znf_CCHC"/>
</dbReference>
<dbReference type="PANTHER" id="PTHR21340:SF0">
    <property type="entry name" value="BIS(5'-NUCLEOSYL)-TETRAPHOSPHATASE [ASYMMETRICAL]"/>
    <property type="match status" value="1"/>
</dbReference>
<dbReference type="PANTHER" id="PTHR21340">
    <property type="entry name" value="DIADENOSINE 5,5-P1,P4-TETRAPHOSPHATE PYROPHOSPHOHYDROLASE MUTT"/>
    <property type="match status" value="1"/>
</dbReference>
<dbReference type="Pfam" id="PF00293">
    <property type="entry name" value="NUDIX"/>
    <property type="match status" value="1"/>
</dbReference>
<dbReference type="SUPFAM" id="SSF55811">
    <property type="entry name" value="Nudix"/>
    <property type="match status" value="1"/>
</dbReference>
<dbReference type="PROSITE" id="PS51462">
    <property type="entry name" value="NUDIX"/>
    <property type="match status" value="1"/>
</dbReference>
<dbReference type="PROSITE" id="PS50158">
    <property type="entry name" value="ZF_CCHC"/>
    <property type="match status" value="1"/>
</dbReference>
<name>DIPP_MIMIV</name>
<sequence>MEYETNFRKKHICSNCGRSGHEFRNCIEPITSYGIINVCISDEYNESMIIKDKFCTKKNTYYRVSSRKHPEISCFISNHIRVRDHENMYKLDNEMIPYRSNEDIHKFCYYKNRILFMMVSRRFSLGFIEFIRGKYDVSDTKSIINLFQHMYEHEIKFINKNRYKYDNILYHFLNRNNEPKKIVLNRIYEGKYSNEYCEAKIKFNMLLNSSNEENNNIPVYLEFYIKHIKPKWKSPEWGFPKGRRDKRSEENMVCACREFEEETGYKKSDYSVLNKIEPIEEKLTGTNGVNYKHIYYLAINNCDINSDLTDYDTYEIGEIKWFTYDEAMARIRPYHIEKKRILTRVYLFILNYLIHNINNT</sequence>
<proteinExistence type="inferred from homology"/>
<evidence type="ECO:0000250" key="1"/>
<evidence type="ECO:0000255" key="2">
    <source>
        <dbReference type="PROSITE-ProRule" id="PRU00047"/>
    </source>
</evidence>
<evidence type="ECO:0000255" key="3">
    <source>
        <dbReference type="PROSITE-ProRule" id="PRU00794"/>
    </source>
</evidence>
<evidence type="ECO:0000305" key="4"/>
<accession>Q5UQW2</accession>
<organism>
    <name type="scientific">Acanthamoeba polyphaga mimivirus</name>
    <name type="common">APMV</name>
    <dbReference type="NCBI Taxonomy" id="212035"/>
    <lineage>
        <taxon>Viruses</taxon>
        <taxon>Varidnaviria</taxon>
        <taxon>Bamfordvirae</taxon>
        <taxon>Nucleocytoviricota</taxon>
        <taxon>Megaviricetes</taxon>
        <taxon>Imitervirales</taxon>
        <taxon>Mimiviridae</taxon>
        <taxon>Megamimivirinae</taxon>
        <taxon>Mimivirus</taxon>
        <taxon>Mimivirus bradfordmassiliense</taxon>
    </lineage>
</organism>
<gene>
    <name type="ordered locus">MIMI_L375</name>
</gene>
<protein>
    <recommendedName>
        <fullName>Putative mRNA-decapping protein</fullName>
        <ecNumber>3.1.3.-</ecNumber>
    </recommendedName>
    <alternativeName>
        <fullName>Diphosphoinositol polyphosphate phosphohydrolase</fullName>
        <shortName>DIPP</shortName>
        <ecNumber>3.6.1.52</ecNumber>
    </alternativeName>
</protein>